<feature type="chain" id="PRO_0000390491" description="cGMP-dependent protein kinase egl-4">
    <location>
        <begin position="1"/>
        <end position="780"/>
    </location>
</feature>
<feature type="domain" description="Protein kinase" evidence="4">
    <location>
        <begin position="469"/>
        <end position="729"/>
    </location>
</feature>
<feature type="domain" description="AGC-kinase C-terminal" evidence="5">
    <location>
        <begin position="730"/>
        <end position="780"/>
    </location>
</feature>
<feature type="region of interest" description="Disordered" evidence="7">
    <location>
        <begin position="1"/>
        <end position="55"/>
    </location>
</feature>
<feature type="region of interest" description="Disordered" evidence="7">
    <location>
        <begin position="119"/>
        <end position="143"/>
    </location>
</feature>
<feature type="region of interest" description="Disordered" evidence="7">
    <location>
        <begin position="757"/>
        <end position="780"/>
    </location>
</feature>
<feature type="coiled-coil region" evidence="3">
    <location>
        <begin position="61"/>
        <end position="127"/>
    </location>
</feature>
<feature type="short sequence motif" description="Nuclear localization signal" evidence="3">
    <location>
        <begin position="492"/>
        <end position="504"/>
    </location>
</feature>
<feature type="compositionally biased region" description="Gly residues" evidence="7">
    <location>
        <begin position="9"/>
        <end position="35"/>
    </location>
</feature>
<feature type="compositionally biased region" description="Polar residues" evidence="7">
    <location>
        <begin position="46"/>
        <end position="55"/>
    </location>
</feature>
<feature type="active site" description="Proton acceptor" evidence="1 4 6">
    <location>
        <position position="593"/>
    </location>
</feature>
<feature type="binding site" evidence="2">
    <location>
        <begin position="265"/>
        <end position="268"/>
    </location>
    <ligand>
        <name>3',5'-cyclic GMP</name>
        <dbReference type="ChEBI" id="CHEBI:57746"/>
        <label>1</label>
    </ligand>
</feature>
<feature type="binding site" evidence="2">
    <location>
        <begin position="275"/>
        <end position="276"/>
    </location>
    <ligand>
        <name>3',5'-cyclic GMP</name>
        <dbReference type="ChEBI" id="CHEBI:57746"/>
        <label>1</label>
    </ligand>
</feature>
<feature type="binding site" evidence="2">
    <location>
        <position position="380"/>
    </location>
    <ligand>
        <name>3',5'-cyclic GMP</name>
        <dbReference type="ChEBI" id="CHEBI:57746"/>
        <label>2</label>
    </ligand>
</feature>
<feature type="binding site" evidence="2">
    <location>
        <begin position="389"/>
        <end position="392"/>
    </location>
    <ligand>
        <name>3',5'-cyclic GMP</name>
        <dbReference type="ChEBI" id="CHEBI:57746"/>
        <label>2</label>
    </ligand>
</feature>
<feature type="binding site" evidence="2">
    <location>
        <begin position="399"/>
        <end position="400"/>
    </location>
    <ligand>
        <name>3',5'-cyclic GMP</name>
        <dbReference type="ChEBI" id="CHEBI:57746"/>
        <label>2</label>
    </ligand>
</feature>
<feature type="binding site" evidence="2">
    <location>
        <position position="434"/>
    </location>
    <ligand>
        <name>3',5'-cyclic GMP</name>
        <dbReference type="ChEBI" id="CHEBI:57746"/>
        <label>2</label>
    </ligand>
</feature>
<feature type="binding site" evidence="1 4">
    <location>
        <begin position="475"/>
        <end position="483"/>
    </location>
    <ligand>
        <name>ATP</name>
        <dbReference type="ChEBI" id="CHEBI:30616"/>
    </ligand>
</feature>
<feature type="binding site" evidence="1 4">
    <location>
        <position position="499"/>
    </location>
    <ligand>
        <name>ATP</name>
        <dbReference type="ChEBI" id="CHEBI:30616"/>
    </ligand>
</feature>
<feature type="splice variant" id="VSP_053170" description="In isoform f." evidence="29">
    <location>
        <begin position="1"/>
        <end position="310"/>
    </location>
</feature>
<feature type="splice variant" id="VSP_053171" description="In isoform d." evidence="29">
    <location>
        <begin position="1"/>
        <end position="188"/>
    </location>
</feature>
<feature type="splice variant" id="VSP_053172" description="In isoform b." evidence="28 29">
    <location>
        <begin position="1"/>
        <end position="43"/>
    </location>
</feature>
<feature type="splice variant" id="VSP_053173" description="In isoform e." evidence="29">
    <location>
        <begin position="1"/>
        <end position="37"/>
    </location>
</feature>
<feature type="splice variant" id="VSP_053174" description="In isoform c." evidence="28 29">
    <original>MSSGSRPSSGGGGGGGGASG</original>
    <variation>MYGSSRHHMDSFSSNDGGAFL</variation>
    <location>
        <begin position="1"/>
        <end position="20"/>
    </location>
</feature>
<feature type="splice variant" id="VSP_053175" description="In isoform c." evidence="28 29">
    <location>
        <begin position="21"/>
        <end position="52"/>
    </location>
</feature>
<feature type="splice variant" id="VSP_053176" description="In isoform e." evidence="29">
    <original>FSKLRKPSDQPNGNQ</original>
    <variation>MCWKFNPLKALRVVE</variation>
    <location>
        <begin position="38"/>
        <end position="52"/>
    </location>
</feature>
<feature type="splice variant" id="VSP_053177" description="In isoform b." evidence="28 29">
    <original>PSDQPNGNQ</original>
    <variation>MKQQPPRIY</variation>
    <location>
        <begin position="44"/>
        <end position="52"/>
    </location>
</feature>
<feature type="splice variant" id="VSP_053178" description="In isoform d." evidence="29">
    <original>KQMIRDAVQKNDFLKQLAKEQIIELVNCMYEMRARAGQWVIQEGEPGDRLFVVAEGELQVSREGALLGKMRAGTVMGELAILYNCTR</original>
    <variation>MLTCSTTTCQISPAYPKFIEKLRRMIWGREPSTSYEFDELAQQVALKSHRRNVDDGYYVEEIHFEPPQVVRKKQPTRNLFYKRSHKK</variation>
    <location>
        <begin position="189"/>
        <end position="275"/>
    </location>
</feature>
<feature type="splice variant" id="VSP_053179" description="In isoform f." evidence="29">
    <original>MNFLTK</original>
    <variation>MKKVYV</variation>
    <location>
        <begin position="311"/>
        <end position="316"/>
    </location>
</feature>
<feature type="splice variant" id="VSP_053180" description="In isoform d." evidence="29">
    <location>
        <begin position="353"/>
        <end position="749"/>
    </location>
</feature>
<feature type="mutagenesis site" description="Constitutively active. Undergoes autophosphorylation in vitro." evidence="18">
    <original>K</original>
    <variation>N</variation>
    <location>
        <position position="162"/>
    </location>
</feature>
<feature type="mutagenesis site" description="Loss of nuclear translocation mediated by cGMP. Loss of nuclear translocation upon prolonged exposure to attractive odorants." evidence="17 19">
    <original>T</original>
    <variation>A</variation>
    <location>
        <position position="276"/>
    </location>
</feature>
<feature type="mutagenesis site" description="Loss of body size, reduced locomotion in the presence of food, a pale intestine, increased intestinal fat storage, and a decreased propensity to form dauer larvae." evidence="13">
    <original>G</original>
    <variation>R</variation>
    <location>
        <position position="362"/>
    </location>
</feature>
<feature type="mutagenesis site" description="No obvious phenotype. May cause partial loss of kinase activity." evidence="18">
    <original>A</original>
    <variation>T</variation>
    <location>
        <position position="497"/>
    </location>
</feature>
<feature type="mutagenesis site" description="Loss of kinase activity." evidence="18">
    <original>K</original>
    <variation>A</variation>
    <location>
        <position position="499"/>
    </location>
</feature>
<feature type="mutagenesis site" description="Loss of adaptive behavior upon prolonged exposure to attractive odorants." evidence="10">
    <original>K</original>
    <variation>E</variation>
    <location>
        <position position="502"/>
    </location>
</feature>
<feature type="mutagenesis site" description="Loss of nuclear translocation upon prolonged exposure to attractive odorants." evidence="17">
    <original>D</original>
    <variation>N</variation>
    <location>
        <position position="611"/>
    </location>
</feature>
<feature type="mutagenesis site" description="No obvious phenotype. May cause partial loss of kinase activity." evidence="18">
    <original>G</original>
    <variation>R</variation>
    <location>
        <position position="682"/>
    </location>
</feature>
<gene>
    <name evidence="32" type="primary">egl-4</name>
    <name evidence="28" type="synonym">cgk-1</name>
    <name evidence="27" type="synonym">odr-9</name>
    <name evidence="32" type="ORF">F55A8.2</name>
</gene>
<keyword id="KW-0025">Alternative splicing</keyword>
<keyword id="KW-0067">ATP-binding</keyword>
<keyword id="KW-0140">cGMP</keyword>
<keyword id="KW-0142">cGMP-binding</keyword>
<keyword id="KW-0145">Chemotaxis</keyword>
<keyword id="KW-0175">Coiled coil</keyword>
<keyword id="KW-0963">Cytoplasm</keyword>
<keyword id="KW-0217">Developmental protein</keyword>
<keyword id="KW-0418">Kinase</keyword>
<keyword id="KW-0460">Magnesium</keyword>
<keyword id="KW-0479">Metal-binding</keyword>
<keyword id="KW-0547">Nucleotide-binding</keyword>
<keyword id="KW-0539">Nucleus</keyword>
<keyword id="KW-1185">Reference proteome</keyword>
<keyword id="KW-0677">Repeat</keyword>
<keyword id="KW-0723">Serine/threonine-protein kinase</keyword>
<keyword id="KW-0808">Transferase</keyword>
<proteinExistence type="evidence at protein level"/>
<comment type="function">
    <text evidence="9 11 12 13 14 15 16 17 18 19 20 21 22 24 25 31">Promotes chemoreceptor gene expression in response to increased cGMP levels by antagonizing the gene repression functions of the class II HDAC hda-4 and the mef-2 transcription factor (PubMed:18832350). Regulates gene expression via recruitment of a histone deacetylase complex containing hda-2, saeg-1 and saeg-2 (PubMed:21573134). Represses body size and lifespan through the dbl-1 and insulin pathways, respectively (PubMed:12571101, PubMed:15330854, PubMed:26434723). May also signal through daf-3 and/or daf-5. Role in egg-laying, dauer formation and motility (PubMed:11181837, PubMed:12571101, PubMed:21573134). Regulates behavioral responses to various chemosensory stimuli in sensory neurons (PubMed:10978280, PubMed:22319638, PubMed:23874221, PubMed:26434723). Required for the initiation of long term adaptation to prolonged odor exposure which results in a decrease in odor seeking behavior (PubMed:12495623, PubMed:20220099, PubMed:26434723). May regulate this process by phosphorylating tax-2, a subunit of cyclic nucleotide-gated channel tax-2/tax-4 (PubMed:12495623). In ASH sensory neurons, negatively regulates avoidance behavior to some bitter tastants, such as quinine, probably by phosphorylating rgs-2 and rgs-3 which are 2 regulator of G-protein signaling proteins (PubMed:23874221). In AWB sensory neurons, involved in avoidance behavior to some repellent odors (PubMed:23954825). In ASE left (ASEL) sensory neuron, involved in the sensing of environmental alkalinity downstream of receptor-type guanylate cyclase gcy-14 (PubMed:23664973). In sensory neurons, involved in the signaling pathway downstream of insulin, TGF-beta and receptor-type guanylate cyclase responsible for inducing quiescence after food intake (PubMed:18316030). Might play a role in aversive olfactory learning in AWC neurons when an odor is associated with food deprivation, depending on the ins-1/age-1 signal from the AIA to the AWC neurons (PubMed:27383131). Probably by regulating neuronal transmission downstream of lin-3 and receptor lin-23 and phospholipase plc-3 in ALA neurons, involved in the decrease in locomotion during the quiescent state that precedes each larval molt (PubMed:17891142).</text>
</comment>
<comment type="catalytic activity">
    <reaction evidence="9 11 18">
        <text>L-seryl-[protein] + ATP = O-phospho-L-seryl-[protein] + ADP + H(+)</text>
        <dbReference type="Rhea" id="RHEA:17989"/>
        <dbReference type="Rhea" id="RHEA-COMP:9863"/>
        <dbReference type="Rhea" id="RHEA-COMP:11604"/>
        <dbReference type="ChEBI" id="CHEBI:15378"/>
        <dbReference type="ChEBI" id="CHEBI:29999"/>
        <dbReference type="ChEBI" id="CHEBI:30616"/>
        <dbReference type="ChEBI" id="CHEBI:83421"/>
        <dbReference type="ChEBI" id="CHEBI:456216"/>
        <dbReference type="EC" id="2.7.11.12"/>
    </reaction>
</comment>
<comment type="catalytic activity">
    <reaction evidence="9 11 18">
        <text>L-threonyl-[protein] + ATP = O-phospho-L-threonyl-[protein] + ADP + H(+)</text>
        <dbReference type="Rhea" id="RHEA:46608"/>
        <dbReference type="Rhea" id="RHEA-COMP:11060"/>
        <dbReference type="Rhea" id="RHEA-COMP:11605"/>
        <dbReference type="ChEBI" id="CHEBI:15378"/>
        <dbReference type="ChEBI" id="CHEBI:30013"/>
        <dbReference type="ChEBI" id="CHEBI:30616"/>
        <dbReference type="ChEBI" id="CHEBI:61977"/>
        <dbReference type="ChEBI" id="CHEBI:456216"/>
        <dbReference type="EC" id="2.7.11.12"/>
    </reaction>
</comment>
<comment type="cofactor">
    <cofactor evidence="9 11">
        <name>Mg(2+)</name>
        <dbReference type="ChEBI" id="CHEBI:18420"/>
    </cofactor>
</comment>
<comment type="activity regulation">
    <text evidence="9 12">Binding of cGMP results in enzyme activation.</text>
</comment>
<comment type="biophysicochemical properties">
    <kinetics>
        <Vmax evidence="9">2.1 umol/min/mg enzyme towards cGMP (Isoform c at pH 6.8 and 30 degrees Celsius)</Vmax>
    </kinetics>
</comment>
<comment type="subunit">
    <text evidence="18">When phosphorylated, interacts with saeg-2. May interact with saeg-1.</text>
</comment>
<comment type="subcellular location">
    <subcellularLocation>
        <location evidence="17 19 21 22 25">Cytoplasm</location>
    </subcellularLocation>
    <subcellularLocation>
        <location evidence="17 18 19 21 22 25">Nucleus</location>
    </subcellularLocation>
    <text evidence="17 19 21 22 25">In resting AWC sensory neurons, localizes in cytoplasm (PubMed:20220099, PubMed:23954825, PubMed:27383131). Prolonged exposure to attractive odorants sensed by AWC neurons results in nuclear translocation (PubMed:20220099, PubMed:23954825, PubMed:27383131). Nuclear translocation is required for the adaptation to prolonged odor exposure and is controlled by G(o)-alpha subunit protein goa-1 (PubMed:20220099, PubMed:23954825, PubMed:27383131). Localization is regulated by cGMP levels: high cGMP levels result in cytoplasmic localization whereas low cGMP levels result in nuclear localization (PubMed:20220099, PubMed:22319638). Nuclear localization in AWC neurons is dependent on age-1 (PubMed:27383131). In addition, an intact sensory cilia structure is required for cytoplasmic localization in resting AWC neurons (PubMed:22319638). In resting AWB sensory neurons, constitutive nuclear localization is dependent on goa-1 (PubMed:23954825). In resting ASH sensory neurons, localizes in both cytoplasm and nucleus (PubMed:23874221). Cytoplasmic localization is important for negative regulation of quinine sensitivity in ASH neurons (PubMed:23874221).</text>
</comment>
<comment type="alternative products">
    <event type="alternative splicing"/>
    <isoform>
        <id>O76360-1</id>
        <name evidence="9 26">a</name>
        <sequence type="displayed"/>
    </isoform>
    <isoform>
        <id>O76360-2</id>
        <name evidence="9 26">b</name>
        <sequence type="described" ref="VSP_053172 VSP_053177"/>
    </isoform>
    <isoform>
        <id>O76360-3</id>
        <name evidence="9 26">c</name>
        <sequence type="described" ref="VSP_053174 VSP_053175"/>
    </isoform>
    <isoform>
        <id>O76360-4</id>
        <name evidence="26">d</name>
        <sequence type="described" ref="VSP_053171 VSP_053178 VSP_053180"/>
    </isoform>
    <isoform>
        <id>O76360-5</id>
        <name evidence="26">e</name>
        <sequence type="described" ref="VSP_053173 VSP_053176"/>
    </isoform>
    <isoform>
        <id>O76360-6</id>
        <name evidence="26">f</name>
        <sequence type="described" ref="VSP_053170 VSP_053179"/>
    </isoform>
</comment>
<comment type="tissue specificity">
    <text evidence="9 11 12 17">Expressed in AWC sensory neurons (at protein level) (PubMed:20220099). Mainly expressed in head neurons, hypodermis, intestine and body wall muscles. L2 and L3 larvae show extensive expression, lower levels are observed in L4 larvae, later embryos and adults. Isoform c is expressed in a subset of neurons in the head, nerve ring, and ventral nerve cord including some motor neurons, also in several neurons in the tail, the pharyngeal marginal cells, body muscle, intestine, vulval muscles, and spermatheca (PubMed:11181837, PubMed:12571101, PubMed:15330854).</text>
</comment>
<comment type="PTM">
    <text evidence="9">Autophosphorylated.</text>
</comment>
<comment type="disruption phenotype">
    <text evidence="8 9 11 12 16 17 23 24">Increased size and extended lifespan (PubMed:11181837, PubMed:12571101, PubMed:18832350, PubMed:26434723). Defects in chemosensory behavior, egg-laying, synaptic transmission, and dauer formation (PubMed:11181837, PubMed:12571101, PubMed:18832350, PubMed:26434723). Impaired movement of adult animals in response to sensory stimuli (PubMed:10978280). Loss of adaptive behavior to long lasting exposure to attractive odorants (PubMed:20220099). Normal initial chemotaxis response during a first and short exposure to attractive odorants (PubMed:20220099). Loss of chemotaxis response to the repellent odor 2-nonanone (PubMed:23954825). Defective chemotaxis in response to diacetyl and isoamylalcohol (PubMed:26434723). High sensitivity to benzaldehyde, which is retained following pre-exposure in contrast to wild-type animals (PubMed:26434723). Increased basal cGMP levels (PubMed:24015261).</text>
</comment>
<comment type="similarity">
    <text evidence="3">Belongs to the protein kinase superfamily. AGC Ser/Thr protein kinase family. cGMP subfamily.</text>
</comment>
<protein>
    <recommendedName>
        <fullName evidence="27 28">cGMP-dependent protein kinase egl-4</fullName>
        <ecNumber evidence="9 11 18">2.7.11.12</ecNumber>
    </recommendedName>
    <alternativeName>
        <fullName>Egg-laying defective protein 4</fullName>
    </alternativeName>
</protein>
<name>EGL4_CAEEL</name>
<sequence>MSSGSRPSSGGGGGGGGASGGAGGGAPGGGGGGIRGFFSKLRKPSDQPNGNQVQVGTRTFEAHELQKLIPQLEEAISRKDAQLRQQQTIVEGHIKRISELEGEVTTLQRECDKLRSVLEQKAQSAASPGGQPPSPSPRTDQLGNDLQQKAVLPADGVQRAKKIAVSAEPTNFENKPATLQHYNKTVGAKQMIRDAVQKNDFLKQLAKEQIIELVNCMYEMRARAGQWVIQEGEPGDRLFVVAEGELQVSREGALLGKMRAGTVMGELAILYNCTRTASVQALTDVQLWVLDRSVFQMITQRLGMERHSQLMNFLTKVSIFQNLSEDRISKMADVMDQDYYDGGHYIIRQGEKGDAFFVINSGQVKVTQQIEGETEPREIRVLNQGDFFGERALLGEEVRTANIIAQAPGVEVLTLDRESFGKLIGDLESLKKDYGDKERLAQVVREPPSPVKIVDDFREEFAQVTLKNVKRLATLGVGGFGRVELVCVNGDKAKTFALKALKKKHIVDTRQQEHIFAERNIMMETSTDWIVKLYKTFRDQKFVYMLLEVCLGGELWTTLRDRGHFDDYTARFYVACVLEGLEYLHRKNIVYRDLKPENCLLANTGYLKLVDFGFAKKLASGRKTWTFCGTPEYVSPEIILNKGHDQAADYWALGIYICELMLGRPPFQASDPMKTYTLILKGVDALEIPNRRIGKTATALVKKLCRDNPGERLGSGSGGVNDIRKHRWFMGFDWEGLRSRTLKPPILPKVSNPADVTNFDNYPPDNDVPPDEFSGWDEGF</sequence>
<dbReference type="EC" id="2.7.11.12" evidence="9 11 18"/>
<dbReference type="EMBL" id="FO081473">
    <property type="protein sequence ID" value="CCD71859.1"/>
    <property type="molecule type" value="Genomic_DNA"/>
</dbReference>
<dbReference type="EMBL" id="FO081473">
    <property type="protein sequence ID" value="CCD71860.1"/>
    <property type="molecule type" value="Genomic_DNA"/>
</dbReference>
<dbReference type="EMBL" id="FO081473">
    <property type="protein sequence ID" value="CCD71861.1"/>
    <property type="molecule type" value="Genomic_DNA"/>
</dbReference>
<dbReference type="EMBL" id="FO081473">
    <property type="protein sequence ID" value="CCD71862.1"/>
    <property type="molecule type" value="Genomic_DNA"/>
</dbReference>
<dbReference type="EMBL" id="FO081473">
    <property type="protein sequence ID" value="CCD71863.1"/>
    <property type="molecule type" value="Genomic_DNA"/>
</dbReference>
<dbReference type="EMBL" id="FO081473">
    <property type="protein sequence ID" value="CCD71864.1"/>
    <property type="molecule type" value="Genomic_DNA"/>
</dbReference>
<dbReference type="RefSeq" id="NP_001023223.1">
    <molecule id="O76360-5"/>
    <property type="nucleotide sequence ID" value="NM_001028052.5"/>
</dbReference>
<dbReference type="RefSeq" id="NP_001023224.1">
    <molecule id="O76360-6"/>
    <property type="nucleotide sequence ID" value="NM_001028053.6"/>
</dbReference>
<dbReference type="RefSeq" id="NP_500141.1">
    <molecule id="O76360-1"/>
    <property type="nucleotide sequence ID" value="NM_067740.6"/>
</dbReference>
<dbReference type="RefSeq" id="NP_500142.1">
    <molecule id="O76360-2"/>
    <property type="nucleotide sequence ID" value="NM_067741.5"/>
</dbReference>
<dbReference type="RefSeq" id="NP_741329.1">
    <molecule id="O76360-3"/>
    <property type="nucleotide sequence ID" value="NM_171279.6"/>
</dbReference>
<dbReference type="RefSeq" id="NP_741330.2">
    <molecule id="O76360-4"/>
    <property type="nucleotide sequence ID" value="NM_171280.4"/>
</dbReference>
<dbReference type="SMR" id="O76360"/>
<dbReference type="BioGRID" id="42146">
    <property type="interactions" value="8"/>
</dbReference>
<dbReference type="FunCoup" id="O76360">
    <property type="interactions" value="488"/>
</dbReference>
<dbReference type="STRING" id="6239.F55A8.2h.1"/>
<dbReference type="PaxDb" id="6239-F55A8.2h.1"/>
<dbReference type="PeptideAtlas" id="O76360"/>
<dbReference type="EnsemblMetazoa" id="F55A8.2a.1">
    <molecule id="O76360-1"/>
    <property type="protein sequence ID" value="F55A8.2a.1"/>
    <property type="gene ID" value="WBGene00001173"/>
</dbReference>
<dbReference type="EnsemblMetazoa" id="F55A8.2a.2">
    <molecule id="O76360-1"/>
    <property type="protein sequence ID" value="F55A8.2a.2"/>
    <property type="gene ID" value="WBGene00001173"/>
</dbReference>
<dbReference type="EnsemblMetazoa" id="F55A8.2b.1">
    <molecule id="O76360-2"/>
    <property type="protein sequence ID" value="F55A8.2b.1"/>
    <property type="gene ID" value="WBGene00001173"/>
</dbReference>
<dbReference type="EnsemblMetazoa" id="F55A8.2c.1">
    <molecule id="O76360-3"/>
    <property type="protein sequence ID" value="F55A8.2c.1"/>
    <property type="gene ID" value="WBGene00001173"/>
</dbReference>
<dbReference type="EnsemblMetazoa" id="F55A8.2d.1">
    <molecule id="O76360-4"/>
    <property type="protein sequence ID" value="F55A8.2d.1"/>
    <property type="gene ID" value="WBGene00001173"/>
</dbReference>
<dbReference type="EnsemblMetazoa" id="F55A8.2e.1">
    <molecule id="O76360-5"/>
    <property type="protein sequence ID" value="F55A8.2e.1"/>
    <property type="gene ID" value="WBGene00001173"/>
</dbReference>
<dbReference type="EnsemblMetazoa" id="F55A8.2f.1">
    <molecule id="O76360-6"/>
    <property type="protein sequence ID" value="F55A8.2f.1"/>
    <property type="gene ID" value="WBGene00001173"/>
</dbReference>
<dbReference type="GeneID" id="176991"/>
<dbReference type="KEGG" id="cel:CELE_F55A8.2"/>
<dbReference type="UCSC" id="F55A8.2a.1">
    <property type="organism name" value="c. elegans"/>
</dbReference>
<dbReference type="AGR" id="WB:WBGene00001173"/>
<dbReference type="CTD" id="176991"/>
<dbReference type="WormBase" id="F55A8.2a">
    <molecule id="O76360-1"/>
    <property type="protein sequence ID" value="CE19897"/>
    <property type="gene ID" value="WBGene00001173"/>
    <property type="gene designation" value="egl-4"/>
</dbReference>
<dbReference type="WormBase" id="F55A8.2b">
    <molecule id="O76360-2"/>
    <property type="protein sequence ID" value="CE19898"/>
    <property type="gene ID" value="WBGene00001173"/>
    <property type="gene designation" value="egl-4"/>
</dbReference>
<dbReference type="WormBase" id="F55A8.2c">
    <molecule id="O76360-3"/>
    <property type="protein sequence ID" value="CE31541"/>
    <property type="gene ID" value="WBGene00001173"/>
    <property type="gene designation" value="egl-4"/>
</dbReference>
<dbReference type="WormBase" id="F55A8.2d">
    <molecule id="O76360-4"/>
    <property type="protein sequence ID" value="CE37718"/>
    <property type="gene ID" value="WBGene00001173"/>
    <property type="gene designation" value="egl-4"/>
</dbReference>
<dbReference type="WormBase" id="F55A8.2e">
    <molecule id="O76360-5"/>
    <property type="protein sequence ID" value="CE37241"/>
    <property type="gene ID" value="WBGene00001173"/>
    <property type="gene designation" value="egl-4"/>
</dbReference>
<dbReference type="WormBase" id="F55A8.2f">
    <molecule id="O76360-6"/>
    <property type="protein sequence ID" value="CE37242"/>
    <property type="gene ID" value="WBGene00001173"/>
    <property type="gene designation" value="egl-4"/>
</dbReference>
<dbReference type="eggNOG" id="KOG0614">
    <property type="taxonomic scope" value="Eukaryota"/>
</dbReference>
<dbReference type="InParanoid" id="O76360"/>
<dbReference type="OrthoDB" id="63267at2759"/>
<dbReference type="PhylomeDB" id="O76360"/>
<dbReference type="Reactome" id="R-CEL-392517">
    <property type="pathway name" value="Rap1 signalling"/>
</dbReference>
<dbReference type="SABIO-RK" id="O76360"/>
<dbReference type="PRO" id="PR:O76360"/>
<dbReference type="Proteomes" id="UP000001940">
    <property type="component" value="Chromosome IV"/>
</dbReference>
<dbReference type="Bgee" id="WBGene00001173">
    <property type="expression patterns" value="Expressed in adult organism and 4 other cell types or tissues"/>
</dbReference>
<dbReference type="ExpressionAtlas" id="O76360">
    <property type="expression patterns" value="baseline and differential"/>
</dbReference>
<dbReference type="GO" id="GO:0005737">
    <property type="term" value="C:cytoplasm"/>
    <property type="evidence" value="ECO:0000315"/>
    <property type="project" value="UniProtKB"/>
</dbReference>
<dbReference type="GO" id="GO:0005829">
    <property type="term" value="C:cytosol"/>
    <property type="evidence" value="ECO:0000314"/>
    <property type="project" value="WormBase"/>
</dbReference>
<dbReference type="GO" id="GO:0005634">
    <property type="term" value="C:nucleus"/>
    <property type="evidence" value="ECO:0000314"/>
    <property type="project" value="WormBase"/>
</dbReference>
<dbReference type="GO" id="GO:0005524">
    <property type="term" value="F:ATP binding"/>
    <property type="evidence" value="ECO:0007669"/>
    <property type="project" value="UniProtKB-KW"/>
</dbReference>
<dbReference type="GO" id="GO:0030553">
    <property type="term" value="F:cGMP binding"/>
    <property type="evidence" value="ECO:0007669"/>
    <property type="project" value="UniProtKB-KW"/>
</dbReference>
<dbReference type="GO" id="GO:0004692">
    <property type="term" value="F:cGMP-dependent protein kinase activity"/>
    <property type="evidence" value="ECO:0000314"/>
    <property type="project" value="WormBase"/>
</dbReference>
<dbReference type="GO" id="GO:0046872">
    <property type="term" value="F:metal ion binding"/>
    <property type="evidence" value="ECO:0007669"/>
    <property type="project" value="UniProtKB-KW"/>
</dbReference>
<dbReference type="GO" id="GO:0106310">
    <property type="term" value="F:protein serine kinase activity"/>
    <property type="evidence" value="ECO:0007669"/>
    <property type="project" value="RHEA"/>
</dbReference>
<dbReference type="GO" id="GO:0007635">
    <property type="term" value="P:chemosensory behavior"/>
    <property type="evidence" value="ECO:0000315"/>
    <property type="project" value="UniProtKB"/>
</dbReference>
<dbReference type="GO" id="GO:0006935">
    <property type="term" value="P:chemotaxis"/>
    <property type="evidence" value="ECO:0007669"/>
    <property type="project" value="UniProtKB-KW"/>
</dbReference>
<dbReference type="GO" id="GO:0043577">
    <property type="term" value="P:chemotropism"/>
    <property type="evidence" value="ECO:0000315"/>
    <property type="project" value="UniProtKB"/>
</dbReference>
<dbReference type="GO" id="GO:0008340">
    <property type="term" value="P:determination of adult lifespan"/>
    <property type="evidence" value="ECO:0000315"/>
    <property type="project" value="UniProtKB"/>
</dbReference>
<dbReference type="GO" id="GO:0008286">
    <property type="term" value="P:insulin receptor signaling pathway"/>
    <property type="evidence" value="ECO:0000316"/>
    <property type="project" value="WormBase"/>
</dbReference>
<dbReference type="GO" id="GO:0030536">
    <property type="term" value="P:larval feeding behavior"/>
    <property type="evidence" value="ECO:0000316"/>
    <property type="project" value="UniProtKB"/>
</dbReference>
<dbReference type="GO" id="GO:0050849">
    <property type="term" value="P:negative regulation of calcium-mediated signaling"/>
    <property type="evidence" value="ECO:0000315"/>
    <property type="project" value="UniProtKB"/>
</dbReference>
<dbReference type="GO" id="GO:0030308">
    <property type="term" value="P:negative regulation of cell growth"/>
    <property type="evidence" value="ECO:0000315"/>
    <property type="project" value="WormBase"/>
</dbReference>
<dbReference type="GO" id="GO:0010754">
    <property type="term" value="P:negative regulation of cGMP-mediated signaling"/>
    <property type="evidence" value="ECO:0000315"/>
    <property type="project" value="UniProtKB"/>
</dbReference>
<dbReference type="GO" id="GO:0061067">
    <property type="term" value="P:negative regulation of dauer larval development"/>
    <property type="evidence" value="ECO:0000315"/>
    <property type="project" value="UniProtKB"/>
</dbReference>
<dbReference type="GO" id="GO:0040015">
    <property type="term" value="P:negative regulation of multicellular organism growth"/>
    <property type="evidence" value="ECO:0000315"/>
    <property type="project" value="UniProtKB"/>
</dbReference>
<dbReference type="GO" id="GO:0046621">
    <property type="term" value="P:negative regulation of organ growth"/>
    <property type="evidence" value="ECO:0000315"/>
    <property type="project" value="WormBase"/>
</dbReference>
<dbReference type="GO" id="GO:0030512">
    <property type="term" value="P:negative regulation of transforming growth factor beta receptor signaling pathway"/>
    <property type="evidence" value="ECO:0000316"/>
    <property type="project" value="WormBase"/>
</dbReference>
<dbReference type="GO" id="GO:0008355">
    <property type="term" value="P:olfactory learning"/>
    <property type="evidence" value="ECO:0000315"/>
    <property type="project" value="UniProtKB"/>
</dbReference>
<dbReference type="GO" id="GO:1905959">
    <property type="term" value="P:positive regulation of cellular response to alcohol"/>
    <property type="evidence" value="ECO:0000315"/>
    <property type="project" value="UniProtKB"/>
</dbReference>
<dbReference type="GO" id="GO:0010753">
    <property type="term" value="P:positive regulation of cGMP-mediated signaling"/>
    <property type="evidence" value="ECO:0000315"/>
    <property type="project" value="WormBase"/>
</dbReference>
<dbReference type="GO" id="GO:0050921">
    <property type="term" value="P:positive regulation of chemotaxis"/>
    <property type="evidence" value="ECO:0000315"/>
    <property type="project" value="UniProtKB"/>
</dbReference>
<dbReference type="GO" id="GO:1901046">
    <property type="term" value="P:positive regulation of egg-laying behavior"/>
    <property type="evidence" value="ECO:0000315"/>
    <property type="project" value="UniProtKB"/>
</dbReference>
<dbReference type="GO" id="GO:0010628">
    <property type="term" value="P:positive regulation of gene expression"/>
    <property type="evidence" value="ECO:0000315"/>
    <property type="project" value="UniProtKB"/>
</dbReference>
<dbReference type="GO" id="GO:0007168">
    <property type="term" value="P:receptor guanylyl cyclase signaling pathway"/>
    <property type="evidence" value="ECO:0000315"/>
    <property type="project" value="UniProtKB"/>
</dbReference>
<dbReference type="GO" id="GO:1903998">
    <property type="term" value="P:regulation of eating behavior"/>
    <property type="evidence" value="ECO:0000316"/>
    <property type="project" value="UniProtKB"/>
</dbReference>
<dbReference type="GO" id="GO:0046662">
    <property type="term" value="P:regulation of egg-laying behavior"/>
    <property type="evidence" value="ECO:0000315"/>
    <property type="project" value="WormBase"/>
</dbReference>
<dbReference type="GO" id="GO:0010468">
    <property type="term" value="P:regulation of gene expression"/>
    <property type="evidence" value="ECO:0000315"/>
    <property type="project" value="UniProtKB"/>
</dbReference>
<dbReference type="GO" id="GO:0040014">
    <property type="term" value="P:regulation of multicellular organism growth"/>
    <property type="evidence" value="ECO:0000316"/>
    <property type="project" value="UniProtKB"/>
</dbReference>
<dbReference type="GO" id="GO:0097305">
    <property type="term" value="P:response to alcohol"/>
    <property type="evidence" value="ECO:0000315"/>
    <property type="project" value="UniProtKB"/>
</dbReference>
<dbReference type="GO" id="GO:0042542">
    <property type="term" value="P:response to hydrogen peroxide"/>
    <property type="evidence" value="ECO:0000315"/>
    <property type="project" value="UniProtKB"/>
</dbReference>
<dbReference type="GO" id="GO:1990834">
    <property type="term" value="P:response to odorant"/>
    <property type="evidence" value="ECO:0000315"/>
    <property type="project" value="UniProtKB"/>
</dbReference>
<dbReference type="GO" id="GO:0070482">
    <property type="term" value="P:response to oxygen levels"/>
    <property type="evidence" value="ECO:0000315"/>
    <property type="project" value="WormBase"/>
</dbReference>
<dbReference type="GO" id="GO:0050913">
    <property type="term" value="P:sensory perception of bitter taste"/>
    <property type="evidence" value="ECO:0000315"/>
    <property type="project" value="UniProtKB"/>
</dbReference>
<dbReference type="GO" id="GO:0007165">
    <property type="term" value="P:signal transduction"/>
    <property type="evidence" value="ECO:0000315"/>
    <property type="project" value="UniProtKB"/>
</dbReference>
<dbReference type="GO" id="GO:0030431">
    <property type="term" value="P:sleep"/>
    <property type="evidence" value="ECO:0000315"/>
    <property type="project" value="WormBase"/>
</dbReference>
<dbReference type="CDD" id="cd00038">
    <property type="entry name" value="CAP_ED"/>
    <property type="match status" value="2"/>
</dbReference>
<dbReference type="CDD" id="cd05572">
    <property type="entry name" value="STKc_cGK"/>
    <property type="match status" value="1"/>
</dbReference>
<dbReference type="FunFam" id="1.10.510.10:FF:000096">
    <property type="entry name" value="cGMP-dependent protein kinase"/>
    <property type="match status" value="1"/>
</dbReference>
<dbReference type="FunFam" id="2.60.120.10:FF:000072">
    <property type="entry name" value="cGMP-dependent protein kinase"/>
    <property type="match status" value="1"/>
</dbReference>
<dbReference type="FunFam" id="2.60.120.10:FF:000064">
    <property type="entry name" value="cGMP-dependent protein kinase, isozyme"/>
    <property type="match status" value="1"/>
</dbReference>
<dbReference type="Gene3D" id="2.60.120.10">
    <property type="entry name" value="Jelly Rolls"/>
    <property type="match status" value="2"/>
</dbReference>
<dbReference type="Gene3D" id="3.30.200.20">
    <property type="entry name" value="Phosphorylase Kinase, domain 1"/>
    <property type="match status" value="1"/>
</dbReference>
<dbReference type="Gene3D" id="1.10.510.10">
    <property type="entry name" value="Transferase(Phosphotransferase) domain 1"/>
    <property type="match status" value="1"/>
</dbReference>
<dbReference type="InterPro" id="IPR000961">
    <property type="entry name" value="AGC-kinase_C"/>
</dbReference>
<dbReference type="InterPro" id="IPR002374">
    <property type="entry name" value="cGMP_dep_kinase"/>
</dbReference>
<dbReference type="InterPro" id="IPR018488">
    <property type="entry name" value="cNMP-bd_CS"/>
</dbReference>
<dbReference type="InterPro" id="IPR000595">
    <property type="entry name" value="cNMP-bd_dom"/>
</dbReference>
<dbReference type="InterPro" id="IPR018490">
    <property type="entry name" value="cNMP-bd_dom_sf"/>
</dbReference>
<dbReference type="InterPro" id="IPR011009">
    <property type="entry name" value="Kinase-like_dom_sf"/>
</dbReference>
<dbReference type="InterPro" id="IPR000719">
    <property type="entry name" value="Prot_kinase_dom"/>
</dbReference>
<dbReference type="InterPro" id="IPR017441">
    <property type="entry name" value="Protein_kinase_ATP_BS"/>
</dbReference>
<dbReference type="InterPro" id="IPR014710">
    <property type="entry name" value="RmlC-like_jellyroll"/>
</dbReference>
<dbReference type="InterPro" id="IPR008271">
    <property type="entry name" value="Ser/Thr_kinase_AS"/>
</dbReference>
<dbReference type="InterPro" id="IPR035014">
    <property type="entry name" value="STKc_cGK"/>
</dbReference>
<dbReference type="PANTHER" id="PTHR24353:SF111">
    <property type="match status" value="1"/>
</dbReference>
<dbReference type="PANTHER" id="PTHR24353">
    <property type="entry name" value="CYCLIC NUCLEOTIDE-DEPENDENT PROTEIN KINASE"/>
    <property type="match status" value="1"/>
</dbReference>
<dbReference type="Pfam" id="PF00027">
    <property type="entry name" value="cNMP_binding"/>
    <property type="match status" value="2"/>
</dbReference>
<dbReference type="Pfam" id="PF00069">
    <property type="entry name" value="Pkinase"/>
    <property type="match status" value="1"/>
</dbReference>
<dbReference type="PIRSF" id="PIRSF000559">
    <property type="entry name" value="cGMP-dep_kinase"/>
    <property type="match status" value="1"/>
</dbReference>
<dbReference type="PRINTS" id="PR00104">
    <property type="entry name" value="CGMPKINASE"/>
</dbReference>
<dbReference type="SMART" id="SM00100">
    <property type="entry name" value="cNMP"/>
    <property type="match status" value="2"/>
</dbReference>
<dbReference type="SMART" id="SM00133">
    <property type="entry name" value="S_TK_X"/>
    <property type="match status" value="1"/>
</dbReference>
<dbReference type="SMART" id="SM00220">
    <property type="entry name" value="S_TKc"/>
    <property type="match status" value="1"/>
</dbReference>
<dbReference type="SUPFAM" id="SSF51206">
    <property type="entry name" value="cAMP-binding domain-like"/>
    <property type="match status" value="2"/>
</dbReference>
<dbReference type="SUPFAM" id="SSF56112">
    <property type="entry name" value="Protein kinase-like (PK-like)"/>
    <property type="match status" value="1"/>
</dbReference>
<dbReference type="PROSITE" id="PS51285">
    <property type="entry name" value="AGC_KINASE_CTER"/>
    <property type="match status" value="1"/>
</dbReference>
<dbReference type="PROSITE" id="PS00888">
    <property type="entry name" value="CNMP_BINDING_1"/>
    <property type="match status" value="2"/>
</dbReference>
<dbReference type="PROSITE" id="PS00889">
    <property type="entry name" value="CNMP_BINDING_2"/>
    <property type="match status" value="2"/>
</dbReference>
<dbReference type="PROSITE" id="PS50042">
    <property type="entry name" value="CNMP_BINDING_3"/>
    <property type="match status" value="2"/>
</dbReference>
<dbReference type="PROSITE" id="PS00107">
    <property type="entry name" value="PROTEIN_KINASE_ATP"/>
    <property type="match status" value="1"/>
</dbReference>
<dbReference type="PROSITE" id="PS50011">
    <property type="entry name" value="PROTEIN_KINASE_DOM"/>
    <property type="match status" value="1"/>
</dbReference>
<dbReference type="PROSITE" id="PS00108">
    <property type="entry name" value="PROTEIN_KINASE_ST"/>
    <property type="match status" value="1"/>
</dbReference>
<evidence type="ECO:0000250" key="1">
    <source>
        <dbReference type="UniProtKB" id="P28523"/>
    </source>
</evidence>
<evidence type="ECO:0000250" key="2">
    <source>
        <dbReference type="UniProtKB" id="Q13976"/>
    </source>
</evidence>
<evidence type="ECO:0000255" key="3"/>
<evidence type="ECO:0000255" key="4">
    <source>
        <dbReference type="PROSITE-ProRule" id="PRU00159"/>
    </source>
</evidence>
<evidence type="ECO:0000255" key="5">
    <source>
        <dbReference type="PROSITE-ProRule" id="PRU00618"/>
    </source>
</evidence>
<evidence type="ECO:0000255" key="6">
    <source>
        <dbReference type="PROSITE-ProRule" id="PRU10027"/>
    </source>
</evidence>
<evidence type="ECO:0000256" key="7">
    <source>
        <dbReference type="SAM" id="MobiDB-lite"/>
    </source>
</evidence>
<evidence type="ECO:0000269" key="8">
    <source>
    </source>
</evidence>
<evidence type="ECO:0000269" key="9">
    <source>
    </source>
</evidence>
<evidence type="ECO:0000269" key="10">
    <source>
    </source>
</evidence>
<evidence type="ECO:0000269" key="11">
    <source>
    </source>
</evidence>
<evidence type="ECO:0000269" key="12">
    <source>
    </source>
</evidence>
<evidence type="ECO:0000269" key="13">
    <source>
    </source>
</evidence>
<evidence type="ECO:0000269" key="14">
    <source>
    </source>
</evidence>
<evidence type="ECO:0000269" key="15">
    <source>
    </source>
</evidence>
<evidence type="ECO:0000269" key="16">
    <source>
    </source>
</evidence>
<evidence type="ECO:0000269" key="17">
    <source>
    </source>
</evidence>
<evidence type="ECO:0000269" key="18">
    <source>
    </source>
</evidence>
<evidence type="ECO:0000269" key="19">
    <source>
    </source>
</evidence>
<evidence type="ECO:0000269" key="20">
    <source>
    </source>
</evidence>
<evidence type="ECO:0000269" key="21">
    <source>
    </source>
</evidence>
<evidence type="ECO:0000269" key="22">
    <source>
    </source>
</evidence>
<evidence type="ECO:0000269" key="23">
    <source>
    </source>
</evidence>
<evidence type="ECO:0000269" key="24">
    <source>
    </source>
</evidence>
<evidence type="ECO:0000269" key="25">
    <source>
    </source>
</evidence>
<evidence type="ECO:0000269" key="26">
    <source>
    </source>
</evidence>
<evidence type="ECO:0000303" key="27">
    <source>
    </source>
</evidence>
<evidence type="ECO:0000303" key="28">
    <source>
    </source>
</evidence>
<evidence type="ECO:0000303" key="29">
    <source>
    </source>
</evidence>
<evidence type="ECO:0000305" key="30"/>
<evidence type="ECO:0000305" key="31">
    <source>
    </source>
</evidence>
<evidence type="ECO:0000312" key="32">
    <source>
        <dbReference type="WormBase" id="F55A8.2a"/>
    </source>
</evidence>
<organism>
    <name type="scientific">Caenorhabditis elegans</name>
    <dbReference type="NCBI Taxonomy" id="6239"/>
    <lineage>
        <taxon>Eukaryota</taxon>
        <taxon>Metazoa</taxon>
        <taxon>Ecdysozoa</taxon>
        <taxon>Nematoda</taxon>
        <taxon>Chromadorea</taxon>
        <taxon>Rhabditida</taxon>
        <taxon>Rhabditina</taxon>
        <taxon>Rhabditomorpha</taxon>
        <taxon>Rhabditoidea</taxon>
        <taxon>Rhabditidae</taxon>
        <taxon>Peloderinae</taxon>
        <taxon>Caenorhabditis</taxon>
    </lineage>
</organism>
<accession>O76360</accession>
<accession>Q688A8</accession>
<accession>Q688A9</accession>
<accession>Q7KPJ2</accession>
<accession>Q8MXG6</accession>
<accession>Q8MXG7</accession>
<reference evidence="30" key="1">
    <citation type="journal article" date="2001" name="J. Neurochem.">
        <title>A cGMP-dependent protein kinase is implicated in wild-type motility in C. elegans.</title>
        <authorList>
            <person name="Stansberry J."/>
            <person name="Baude E.J."/>
            <person name="Taylor M.K."/>
            <person name="Chen P.J."/>
            <person name="Jin S.W."/>
            <person name="Ellis R.E."/>
            <person name="Uhler M.D."/>
        </authorList>
    </citation>
    <scope>NUCLEOTIDE SEQUENCE [MRNA] (ISOFORMS A; B AND C)</scope>
    <scope>FUNCTION</scope>
    <scope>CATALYTIC ACTIVITY</scope>
    <scope>ACTIVITY REGULATION</scope>
    <scope>BIOPHYSICOCHEMICAL PROPERTIES</scope>
    <scope>TISSUE SPECIFICITY</scope>
    <scope>AUTOPHOSPHORYLATION</scope>
    <scope>DISRUPTION PHENOTYPE</scope>
</reference>
<reference evidence="30" key="2">
    <citation type="journal article" date="1998" name="Science">
        <title>Genome sequence of the nematode C. elegans: a platform for investigating biology.</title>
        <authorList>
            <consortium name="The C. elegans sequencing consortium"/>
        </authorList>
    </citation>
    <scope>NUCLEOTIDE SEQUENCE [LARGE SCALE GENOMIC DNA]</scope>
    <scope>ALTERNATIVE SPLICING</scope>
    <source>
        <strain>Bristol N2</strain>
    </source>
</reference>
<reference evidence="30" key="3">
    <citation type="journal article" date="2000" name="Genetics">
        <title>egl-4 acts through a transforming growth factor-beta/SMAD pathway in Caenorhabditis elegans to regulate multiple neuronal circuits in response to sensory cues.</title>
        <authorList>
            <person name="Daniels S.A."/>
            <person name="Ailion M."/>
            <person name="Thomas J.H."/>
            <person name="Sengupta P."/>
        </authorList>
    </citation>
    <scope>DISRUPTION PHENOTYPE</scope>
</reference>
<reference key="4">
    <citation type="journal article" date="2002" name="Neuron">
        <title>The cyclic GMP-dependent protein kinase EGL-4 regulates olfactory adaptation in C. elegans.</title>
        <authorList>
            <person name="L'Etoile N.D."/>
            <person name="Coburn C.M."/>
            <person name="Eastham J."/>
            <person name="Kistler A."/>
            <person name="Gallegos G."/>
            <person name="Bargmann C.I."/>
        </authorList>
    </citation>
    <scope>FUNCTION</scope>
    <scope>NUCLEAR LOCALIZATION SIGNAL</scope>
    <scope>MUTAGENESIS OF LYS-502</scope>
</reference>
<reference key="5">
    <citation type="journal article" date="2003" name="Development">
        <title>Cyclic GMP-dependent protein kinase EGL-4 controls body size and lifespan in C elegans.</title>
        <authorList>
            <person name="Hirose T."/>
            <person name="Nakano Y."/>
            <person name="Nagamatsu Y."/>
            <person name="Misumi T."/>
            <person name="Ohta H."/>
            <person name="Ohshima Y."/>
        </authorList>
    </citation>
    <scope>FUNCTION</scope>
    <scope>CATALYTIC ACTIVITY</scope>
    <scope>TISSUE SPECIFICITY</scope>
    <scope>DISRUPTION PHENOTYPE</scope>
</reference>
<reference key="6">
    <citation type="journal article" date="2004" name="Genes Cells">
        <title>cGMP and a germ-line signal control body size in C. elegans through cGMP-dependent protein kinase EGL-4.</title>
        <authorList>
            <person name="Nakano Y."/>
            <person name="Nagamatsu Y."/>
            <person name="Ohshima Y."/>
        </authorList>
    </citation>
    <scope>FUNCTION</scope>
    <scope>ACTIVITY REGULATION</scope>
    <scope>TISSUE SPECIFICITY</scope>
    <scope>DISRUPTION PHENOTYPE</scope>
</reference>
<reference key="7">
    <citation type="journal article" date="2006" name="Genetics">
        <title>A novel gain-of-function mutant of the cyclic GMP-dependent protein kinase egl-4 affects multiple physiological processes in Caenorhabditis elegans.</title>
        <authorList>
            <person name="Raizen D.M."/>
            <person name="Cullison K.M."/>
            <person name="Pack A.I."/>
            <person name="Sundaram M.V."/>
        </authorList>
    </citation>
    <scope>FUNCTION</scope>
    <scope>MUTAGENESIS OF GLY-362</scope>
</reference>
<reference key="8">
    <citation type="journal article" date="2007" name="Nat. Neurosci.">
        <title>Epidermal growth factor signaling induces behavioral quiescence in Caenorhabditis elegans.</title>
        <authorList>
            <person name="Van Buskirk C."/>
            <person name="Sternberg P.W."/>
        </authorList>
    </citation>
    <scope>FUNCTION</scope>
</reference>
<reference key="9">
    <citation type="journal article" date="2008" name="Cell Metab.">
        <title>Insulin, cGMP, and TGF-beta signals regulate food intake and quiescence in C. elegans: a model for satiety.</title>
        <authorList>
            <person name="You Y.J."/>
            <person name="Kim J."/>
            <person name="Raizen D.M."/>
            <person name="Avery L."/>
        </authorList>
    </citation>
    <scope>FUNCTION</scope>
</reference>
<reference key="10">
    <citation type="journal article" date="2008" name="Genetics">
        <title>The EGL-4 PKG acts with KIN-29 salt-inducible kinase and protein kinase A to regulate chemoreceptor gene expression and sensory behaviors in Caenorhabditis elegans.</title>
        <authorList>
            <person name="van der Linden A.M."/>
            <person name="Wiener S."/>
            <person name="You Y.J."/>
            <person name="Kim K."/>
            <person name="Avery L."/>
            <person name="Sengupta P."/>
        </authorList>
    </citation>
    <scope>FUNCTION</scope>
    <scope>DISRUPTION PHENOTYPE</scope>
</reference>
<reference key="11">
    <citation type="journal article" date="2010" name="Proc. Natl. Acad. Sci. U.S.A.">
        <title>Nuclear entry of a cGMP-dependent kinase converts transient into long-lasting olfactory adaptation.</title>
        <authorList>
            <person name="Lee J.I."/>
            <person name="O'Halloran D.M."/>
            <person name="Eastham-Anderson J."/>
            <person name="Juang B.T."/>
            <person name="Kaye J.A."/>
            <person name="Scott Hamilton O."/>
            <person name="Lesch B."/>
            <person name="Goga A."/>
            <person name="L'Etoile N.D."/>
        </authorList>
    </citation>
    <scope>FUNCTION</scope>
    <scope>SUBCELLULAR LOCATION</scope>
    <scope>TISSUE SPECIFICITY</scope>
    <scope>DISRUPTION PHENOTYPE</scope>
    <scope>MUTAGENESIS OF THR-276 AND ASP-611</scope>
</reference>
<reference key="12">
    <citation type="journal article" date="2011" name="PLoS Genet.">
        <title>Nuclear cGMP-dependent kinase regulates gene expression via activity-dependent recruitment of a conserved histone deacetylase complex.</title>
        <authorList>
            <person name="Hao Y."/>
            <person name="Xu N."/>
            <person name="Box A.C."/>
            <person name="Schaefer L."/>
            <person name="Kannan K."/>
            <person name="Zhang Y."/>
            <person name="Florens L."/>
            <person name="Seidel C."/>
            <person name="Washburn M.P."/>
            <person name="Wiegraebe W."/>
            <person name="Mak H.Y."/>
        </authorList>
    </citation>
    <scope>FUNCTION</scope>
    <scope>CATALYTIC ACTIVITY</scope>
    <scope>MUTAGENESIS OF LYS-162; ALA-497; LYS-499 AND GLY-682</scope>
</reference>
<reference key="13">
    <citation type="journal article" date="2012" name="PLoS ONE">
        <title>Changes in cGMP levels affect the localization of EGL-4 in AWC in Caenorhabditis elegans.</title>
        <authorList>
            <person name="O'Halloran D.M."/>
            <person name="Hamilton O.S."/>
            <person name="Lee J.I."/>
            <person name="Gallegos M."/>
            <person name="L'Etoile N.D."/>
        </authorList>
    </citation>
    <scope>FUNCTION</scope>
    <scope>SUBCELLULAR LOCATION</scope>
    <scope>MUTAGENESIS OF THR-276</scope>
</reference>
<reference key="14">
    <citation type="journal article" date="2013" name="Curr. Biol.">
        <title>Environmental alkalinity sensing mediated by the transmembrane guanylyl cyclase GCY-14 in C. elegans.</title>
        <authorList>
            <person name="Murayama T."/>
            <person name="Takayama J."/>
            <person name="Fujiwara M."/>
            <person name="Maruyama I.N."/>
        </authorList>
    </citation>
    <scope>FUNCTION</scope>
</reference>
<reference key="15">
    <citation type="journal article" date="2013" name="Neurosci. Lett.">
        <title>Nuclear PKG localization is regulated by G(0) alpha and is necessary in the AWB neurons to mediate avoidance in Caenorhabditis elegans.</title>
        <authorList>
            <person name="He C."/>
            <person name="O'Halloran D.M."/>
        </authorList>
    </citation>
    <scope>FUNCTION</scope>
    <scope>SUBCELLULAR LOCATION</scope>
</reference>
<reference key="16">
    <citation type="journal article" date="2013" name="PLoS Genet.">
        <title>The C. elegans cGMP-dependent protein kinase EGL-4 regulates nociceptive behavioral sensitivity.</title>
        <authorList>
            <person name="Krzyzanowski M.C."/>
            <person name="Brueggemann C."/>
            <person name="Ezak M.J."/>
            <person name="Wood J.F."/>
            <person name="Michaels K.L."/>
            <person name="Jackson C.A."/>
            <person name="Juang B.T."/>
            <person name="Collins K.D."/>
            <person name="Yu M.C."/>
            <person name="L'etoile N.D."/>
            <person name="Ferkey D.M."/>
        </authorList>
    </citation>
    <scope>FUNCTION</scope>
    <scope>SUBCELLULAR LOCATION</scope>
</reference>
<reference key="17">
    <citation type="journal article" date="2013" name="PLoS ONE">
        <title>The receptor-bound guanylyl cyclase DAF-11 is the mediator of hydrogen peroxide-induced cGMP increase in Caenorhabditis elegans.</title>
        <authorList>
            <person name="Beckert U."/>
            <person name="Aw W.Y."/>
            <person name="Burhenne H."/>
            <person name="Forsterling L."/>
            <person name="Kaever V."/>
            <person name="Timmons L."/>
            <person name="Seifert R."/>
        </authorList>
    </citation>
    <scope>DISRUPTION PHENOTYPE</scope>
</reference>
<reference key="18">
    <citation type="journal article" date="2015" name="Genetics">
        <title>The importance of cGMP signaling in sensory cilia for body size regulation in Caenorhabditis elegans.</title>
        <authorList>
            <person name="Fujiwara M."/>
            <person name="Hino T."/>
            <person name="Miyamoto R."/>
            <person name="Inada H."/>
            <person name="Mori I."/>
            <person name="Koga M."/>
            <person name="Miyahara K."/>
            <person name="Ohshima Y."/>
            <person name="Ishihara T."/>
        </authorList>
    </citation>
    <scope>FUNCTION</scope>
    <scope>DISRUPTION PHENOTYPE</scope>
</reference>
<reference key="19">
    <citation type="journal article" date="2016" name="Elife">
        <title>Parallel encoding of sensory history and behavioral preference during Caenorhabditis elegans olfactory learning.</title>
        <authorList>
            <person name="Cho C.E."/>
            <person name="Brueggemann C."/>
            <person name="L'Etoile N.D."/>
            <person name="Bargmann C.I."/>
        </authorList>
    </citation>
    <scope>FUNCTION</scope>
    <scope>SUBCELLULAR LOCATION</scope>
</reference>